<keyword id="KW-0025">Alternative splicing</keyword>
<keyword id="KW-0963">Cytoplasm</keyword>
<keyword id="KW-0206">Cytoskeleton</keyword>
<keyword id="KW-1185">Reference proteome</keyword>
<evidence type="ECO:0000250" key="1"/>
<evidence type="ECO:0000303" key="2">
    <source ref="2"/>
</evidence>
<evidence type="ECO:0000305" key="3"/>
<organism>
    <name type="scientific">Xenopus tropicalis</name>
    <name type="common">Western clawed frog</name>
    <name type="synonym">Silurana tropicalis</name>
    <dbReference type="NCBI Taxonomy" id="8364"/>
    <lineage>
        <taxon>Eukaryota</taxon>
        <taxon>Metazoa</taxon>
        <taxon>Chordata</taxon>
        <taxon>Craniata</taxon>
        <taxon>Vertebrata</taxon>
        <taxon>Euteleostomi</taxon>
        <taxon>Amphibia</taxon>
        <taxon>Batrachia</taxon>
        <taxon>Anura</taxon>
        <taxon>Pipoidea</taxon>
        <taxon>Pipidae</taxon>
        <taxon>Xenopodinae</taxon>
        <taxon>Xenopus</taxon>
        <taxon>Silurana</taxon>
    </lineage>
</organism>
<reference key="1">
    <citation type="submission" date="2006-10" db="EMBL/GenBank/DDBJ databases">
        <authorList>
            <consortium name="Sanger Xenopus tropicalis EST/cDNA project"/>
        </authorList>
    </citation>
    <scope>NUCLEOTIDE SEQUENCE [LARGE SCALE MRNA] (ISOFORM 1)</scope>
    <source>
        <tissue>Egg</tissue>
    </source>
</reference>
<reference key="2">
    <citation type="submission" date="2008-02" db="EMBL/GenBank/DDBJ databases">
        <authorList>
            <consortium name="NIH - Xenopus Gene Collection (XGC) project"/>
        </authorList>
    </citation>
    <scope>NUCLEOTIDE SEQUENCE [LARGE SCALE MRNA] (ISOFORM 2)</scope>
    <source>
        <tissue>Embryo</tissue>
    </source>
</reference>
<gene>
    <name type="primary">cep76</name>
    <name type="ORF">TEgg032c01.1</name>
</gene>
<sequence>MALPPEKATELKQIIHEQLTRMDVHGKIREVLAESLREEFRTESQQLSEEDLMKALRQRGIVDEVMKELHFMEDRNTRELTSTPKPATHFIDKEPRTLKKTNVDPTRRYLHLQVLSGKAFLEHLQESDPLPGQACSTFTLCLHFRNQRFRSKPVPCACEPDFQDGFLLEVHKDSLGDGSRMADATTMLSICDPVQLVLLKTDTSGETSLVSSHFLEWRSVLGTEKGATSLVVELLGVGAECKVSVGILNVKLELYPLLNKTLSQEVINTQFTLERQKTAEKERLFLVYAKQWWREYLQIRPSHNSRLVKIFAQDENWVNRPVCSYIRPLRAGRLLDTPRQAARFVNVLGYERAPTVGGGGKQEQWCTLLAFLCRNKGDCEDHCNLLCSLLLGFGLDAYVCVGTKGRGQAHTWVMTCGTDGAITFWESLTGHRYVHKPINPDDPPMVEQPKPLYPYKTIGCVFNHKRFLANSQPLDAVEVCVFDLHDESRWKPMSEEAIKSVCSPGSIASLPPFPPLCGSLLDAATESNEIELQLRVLVLEHRKDLGLTTVWDDQLSYLLSPALASYEIERTTGISAGNEEFQDCIRRAVPDGHTFKGFPIHFVHRNARRAFATCLRSPFCDEIISCRGDQMRLAVRVRVYTYPEAACAVWIMFACKYRSVL</sequence>
<protein>
    <recommendedName>
        <fullName>Centrosomal protein of 76 kDa</fullName>
        <shortName>Cep76</shortName>
    </recommendedName>
</protein>
<feature type="chain" id="PRO_0000378952" description="Centrosomal protein of 76 kDa">
    <location>
        <begin position="1"/>
        <end position="661"/>
    </location>
</feature>
<feature type="splice variant" id="VSP_037628" description="In isoform 2." evidence="2">
    <original>DENWVNR</original>
    <variation>VYSELLI</variation>
    <location>
        <begin position="314"/>
        <end position="320"/>
    </location>
</feature>
<feature type="splice variant" id="VSP_037629" description="In isoform 2." evidence="2">
    <location>
        <begin position="321"/>
        <end position="661"/>
    </location>
</feature>
<name>CEP76_XENTR</name>
<dbReference type="EMBL" id="CR855505">
    <property type="protein sequence ID" value="CAJ81499.1"/>
    <property type="molecule type" value="mRNA"/>
</dbReference>
<dbReference type="EMBL" id="BC158976">
    <property type="protein sequence ID" value="AAI58977.1"/>
    <property type="molecule type" value="mRNA"/>
</dbReference>
<dbReference type="RefSeq" id="NP_001016831.1">
    <molecule id="Q28DH9-1"/>
    <property type="nucleotide sequence ID" value="NM_001016831.2"/>
</dbReference>
<dbReference type="SMR" id="Q28DH9"/>
<dbReference type="FunCoup" id="Q28DH9">
    <property type="interactions" value="1333"/>
</dbReference>
<dbReference type="STRING" id="8364.ENSXETP00000000643"/>
<dbReference type="PaxDb" id="8364-ENSXETP00000042582"/>
<dbReference type="GeneID" id="549585"/>
<dbReference type="KEGG" id="xtr:549585"/>
<dbReference type="AGR" id="Xenbase:XB-GENE-966809"/>
<dbReference type="CTD" id="79959"/>
<dbReference type="Xenbase" id="XB-GENE-966809">
    <property type="gene designation" value="cep76"/>
</dbReference>
<dbReference type="eggNOG" id="ENOG502QQEI">
    <property type="taxonomic scope" value="Eukaryota"/>
</dbReference>
<dbReference type="HOGENOM" id="CLU_027144_0_0_1"/>
<dbReference type="InParanoid" id="Q28DH9"/>
<dbReference type="OMA" id="RRWWSEY"/>
<dbReference type="OrthoDB" id="5527234at2759"/>
<dbReference type="PhylomeDB" id="Q28DH9"/>
<dbReference type="TreeFam" id="TF329324"/>
<dbReference type="Reactome" id="R-XTR-2565942">
    <property type="pathway name" value="Regulation of PLK1 Activity at G2/M Transition"/>
</dbReference>
<dbReference type="Reactome" id="R-XTR-380259">
    <property type="pathway name" value="Loss of Nlp from mitotic centrosomes"/>
</dbReference>
<dbReference type="Reactome" id="R-XTR-380270">
    <property type="pathway name" value="Recruitment of mitotic centrosome proteins and complexes"/>
</dbReference>
<dbReference type="Reactome" id="R-XTR-380320">
    <property type="pathway name" value="Recruitment of NuMA to mitotic centrosomes"/>
</dbReference>
<dbReference type="Reactome" id="R-XTR-5620912">
    <property type="pathway name" value="Anchoring of the basal body to the plasma membrane"/>
</dbReference>
<dbReference type="Reactome" id="R-XTR-8854518">
    <property type="pathway name" value="AURKA Activation by TPX2"/>
</dbReference>
<dbReference type="Proteomes" id="UP000008143">
    <property type="component" value="Chromosome 6"/>
</dbReference>
<dbReference type="Bgee" id="ENSXETG00000019671">
    <property type="expression patterns" value="Expressed in 2-cell stage embryo and 12 other cell types or tissues"/>
</dbReference>
<dbReference type="GO" id="GO:0005814">
    <property type="term" value="C:centriole"/>
    <property type="evidence" value="ECO:0000250"/>
    <property type="project" value="UniProtKB"/>
</dbReference>
<dbReference type="GO" id="GO:0005813">
    <property type="term" value="C:centrosome"/>
    <property type="evidence" value="ECO:0007669"/>
    <property type="project" value="UniProtKB-SubCell"/>
</dbReference>
<dbReference type="GO" id="GO:0005737">
    <property type="term" value="C:cytoplasm"/>
    <property type="evidence" value="ECO:0007669"/>
    <property type="project" value="UniProtKB-KW"/>
</dbReference>
<dbReference type="GO" id="GO:0046599">
    <property type="term" value="P:regulation of centriole replication"/>
    <property type="evidence" value="ECO:0000250"/>
    <property type="project" value="UniProtKB"/>
</dbReference>
<dbReference type="FunFam" id="3.10.620.30:FF:000003">
    <property type="entry name" value="Centrosomal protein of 76 kDa"/>
    <property type="match status" value="1"/>
</dbReference>
<dbReference type="Gene3D" id="3.10.620.30">
    <property type="match status" value="1"/>
</dbReference>
<dbReference type="InterPro" id="IPR052299">
    <property type="entry name" value="CEP76"/>
</dbReference>
<dbReference type="InterPro" id="IPR028926">
    <property type="entry name" value="CEP76-C2"/>
</dbReference>
<dbReference type="InterPro" id="IPR056288">
    <property type="entry name" value="CEP76_C"/>
</dbReference>
<dbReference type="InterPro" id="IPR056289">
    <property type="entry name" value="CEP76_N"/>
</dbReference>
<dbReference type="InterPro" id="IPR056290">
    <property type="entry name" value="CEPT76/DRC7_peptidase-like_dom"/>
</dbReference>
<dbReference type="InterPro" id="IPR038765">
    <property type="entry name" value="Papain-like_cys_pep_sf"/>
</dbReference>
<dbReference type="PANTHER" id="PTHR46436">
    <property type="entry name" value="CENTROSOMAL PROTEIN OF 76 KDA"/>
    <property type="match status" value="1"/>
</dbReference>
<dbReference type="PANTHER" id="PTHR46436:SF1">
    <property type="entry name" value="CENTROSOMAL PROTEIN OF 76 KDA"/>
    <property type="match status" value="1"/>
</dbReference>
<dbReference type="Pfam" id="PF15627">
    <property type="entry name" value="CEP76-C2"/>
    <property type="match status" value="1"/>
</dbReference>
<dbReference type="Pfam" id="PF24652">
    <property type="entry name" value="CEP76_C"/>
    <property type="match status" value="1"/>
</dbReference>
<dbReference type="Pfam" id="PF24654">
    <property type="entry name" value="CEP76_N"/>
    <property type="match status" value="1"/>
</dbReference>
<dbReference type="Pfam" id="PF24656">
    <property type="entry name" value="CEPT76_peptidase"/>
    <property type="match status" value="1"/>
</dbReference>
<dbReference type="SUPFAM" id="SSF54001">
    <property type="entry name" value="Cysteine proteinases"/>
    <property type="match status" value="1"/>
</dbReference>
<accession>Q28DH9</accession>
<accession>B0JYZ5</accession>
<proteinExistence type="evidence at transcript level"/>
<comment type="function">
    <text evidence="1">Centrosomal protein involved in regulation of centriole duplication. Required to limit centriole duplication to once per cell cycle by preventing centriole reduplication (By similarity).</text>
</comment>
<comment type="subcellular location">
    <subcellularLocation>
        <location evidence="1">Cytoplasm</location>
        <location evidence="1">Cytoskeleton</location>
        <location evidence="1">Microtubule organizing center</location>
        <location evidence="1">Centrosome</location>
    </subcellularLocation>
    <subcellularLocation>
        <location evidence="1">Cytoplasm</location>
        <location evidence="1">Cytoskeleton</location>
        <location evidence="1">Microtubule organizing center</location>
        <location evidence="1">Centrosome</location>
        <location evidence="1">Centriole</location>
    </subcellularLocation>
    <text evidence="1">Does not localize along the ciliary axoneme.</text>
</comment>
<comment type="alternative products">
    <event type="alternative splicing"/>
    <isoform>
        <id>Q28DH9-1</id>
        <name>1</name>
        <sequence type="displayed"/>
    </isoform>
    <isoform>
        <id>Q28DH9-2</id>
        <name>2</name>
        <sequence type="described" ref="VSP_037628 VSP_037629"/>
    </isoform>
</comment>
<comment type="similarity">
    <text evidence="3">Belongs to the CEP76 family.</text>
</comment>